<sequence length="84" mass="9584">MGKKDASTTRTPVDQYRKQIGRQDYKKNKPVLKATRLKAEAKKAAIGIKEVILVTIAILVLLFAFYAFFFLNLTKTDIYEDSNN</sequence>
<comment type="function">
    <text evidence="2">Plays a role in cell growth and maintenance of cell morphology.</text>
</comment>
<comment type="subcellular location">
    <subcellularLocation>
        <location evidence="2">Endoplasmic reticulum membrane</location>
        <topology evidence="2">Single-pass membrane protein</topology>
    </subcellularLocation>
</comment>
<comment type="developmental stage">
    <text evidence="2">Expressed from oocyte to tadpole stages. Expressed in all animal, marginal and vegetal parts of blastula embryos. Expressed broadly in the head, trunk and tail region of tadpoles. Expressed in the midline at the neurula stage; the signal is detected in the notochord, neuroal tube and cement gland.</text>
</comment>
<comment type="domain">
    <text>Both the conserved triple repeat of the QXXK/R motif and the hydrophobic region are essential for its activity. The hydrophobic region contributes to the endoplasmic reticulum membrane localization.</text>
</comment>
<comment type="similarity">
    <text evidence="3">Belongs to the TRIQK family.</text>
</comment>
<organism>
    <name type="scientific">Xenopus laevis</name>
    <name type="common">African clawed frog</name>
    <dbReference type="NCBI Taxonomy" id="8355"/>
    <lineage>
        <taxon>Eukaryota</taxon>
        <taxon>Metazoa</taxon>
        <taxon>Chordata</taxon>
        <taxon>Craniata</taxon>
        <taxon>Vertebrata</taxon>
        <taxon>Euteleostomi</taxon>
        <taxon>Amphibia</taxon>
        <taxon>Batrachia</taxon>
        <taxon>Anura</taxon>
        <taxon>Pipoidea</taxon>
        <taxon>Pipidae</taxon>
        <taxon>Xenopodinae</taxon>
        <taxon>Xenopus</taxon>
        <taxon>Xenopus</taxon>
    </lineage>
</organism>
<feature type="chain" id="PRO_0000398148" description="Triple QxxK/R motif-containing protein">
    <location>
        <begin position="1"/>
        <end position="84"/>
    </location>
</feature>
<feature type="transmembrane region" description="Helical" evidence="1">
    <location>
        <begin position="51"/>
        <end position="71"/>
    </location>
</feature>
<reference key="1">
    <citation type="journal article" date="2008" name="Zool. Sci.">
        <title>TRIQK, a novel family of small proteins localized to the endoplasmic reticulum membrane, is conserved across vertebrates.</title>
        <authorList>
            <person name="Onuma Y."/>
            <person name="Watanabe A."/>
            <person name="Aburatani H."/>
            <person name="Asashima M."/>
            <person name="Whitman M."/>
        </authorList>
    </citation>
    <scope>NUCLEOTIDE SEQUENCE [MRNA]</scope>
    <scope>FUNCTION</scope>
    <scope>SUBCELLULAR LOCATION</scope>
    <scope>DEVELOPMENTAL STAGE</scope>
    <scope>TISSUE SPECIFICITY</scope>
    <source>
        <tissue>Egg</tissue>
    </source>
</reference>
<proteinExistence type="evidence at transcript level"/>
<keyword id="KW-0256">Endoplasmic reticulum</keyword>
<keyword id="KW-0472">Membrane</keyword>
<keyword id="KW-1185">Reference proteome</keyword>
<keyword id="KW-0812">Transmembrane</keyword>
<keyword id="KW-1133">Transmembrane helix</keyword>
<protein>
    <recommendedName>
        <fullName>Triple QxxK/R motif-containing protein</fullName>
    </recommendedName>
    <alternativeName>
        <fullName>Triple repetitive-sequence of QXXK/R protein</fullName>
    </alternativeName>
</protein>
<accession>B2B9D9</accession>
<name>TRIQK_XENLA</name>
<gene>
    <name type="primary">triqk</name>
</gene>
<dbReference type="EMBL" id="DQ351290">
    <property type="protein sequence ID" value="ABC84189.1"/>
    <property type="molecule type" value="mRNA"/>
</dbReference>
<dbReference type="RefSeq" id="NP_001121324.1">
    <property type="nucleotide sequence ID" value="NM_001127852.1"/>
</dbReference>
<dbReference type="SMR" id="B2B9D9"/>
<dbReference type="GeneID" id="100158412"/>
<dbReference type="KEGG" id="xla:100158412"/>
<dbReference type="AGR" id="Xenbase:XB-GENE-6252747"/>
<dbReference type="CTD" id="100158412"/>
<dbReference type="Xenbase" id="XB-GENE-6252747">
    <property type="gene designation" value="triqk.L"/>
</dbReference>
<dbReference type="OMA" id="NIGKQDY"/>
<dbReference type="OrthoDB" id="10049402at2759"/>
<dbReference type="Proteomes" id="UP000186698">
    <property type="component" value="Chromosome 6L"/>
</dbReference>
<dbReference type="Bgee" id="100158412">
    <property type="expression patterns" value="Expressed in neurula embryo and 19 other cell types or tissues"/>
</dbReference>
<dbReference type="GO" id="GO:0005789">
    <property type="term" value="C:endoplasmic reticulum membrane"/>
    <property type="evidence" value="ECO:0007669"/>
    <property type="project" value="UniProtKB-SubCell"/>
</dbReference>
<dbReference type="InterPro" id="IPR024842">
    <property type="entry name" value="TRIQK"/>
</dbReference>
<dbReference type="PANTHER" id="PTHR20583">
    <property type="entry name" value="TRIPLE QXXK/R MOTIF-CONTAINING PROTEIN"/>
    <property type="match status" value="1"/>
</dbReference>
<dbReference type="PANTHER" id="PTHR20583:SF1">
    <property type="entry name" value="TRIPLE QXXK_R MOTIF-CONTAINING PROTEIN"/>
    <property type="match status" value="1"/>
</dbReference>
<dbReference type="Pfam" id="PF15168">
    <property type="entry name" value="TRIQK"/>
    <property type="match status" value="1"/>
</dbReference>
<evidence type="ECO:0000255" key="1"/>
<evidence type="ECO:0000269" key="2">
    <source>
    </source>
</evidence>
<evidence type="ECO:0000305" key="3"/>